<protein>
    <recommendedName>
        <fullName evidence="1">UDP-3-O-acylglucosamine N-acyltransferase</fullName>
        <ecNumber evidence="1">2.3.1.191</ecNumber>
    </recommendedName>
</protein>
<accession>Q1MPK2</accession>
<evidence type="ECO:0000255" key="1">
    <source>
        <dbReference type="HAMAP-Rule" id="MF_00523"/>
    </source>
</evidence>
<sequence length="341" mass="36687">MPQYKLSEIAKLLNLTLQGDDIEVVGVNTLQDASPNEISFLANAKYIHQLVLSQAGAIILSKEYASRVPRALISTEPYRDFGRVLSLFSIPQGCFDGISHQAYIHPTAQVSKTATIYPFVFIGSHTVIEENTTLFPGVYIGEHCHIGKNCTIYPNTVLMANTSIGNDCIIHAGVVLGSDGFGFALTEEKQKIPQVGNVIIKDKVEIGANTTVDRGTLGTTTINENTKIDNLVQIGHGVTVGKNTVIVSQVGISGSTSIGDNCILAGQAGISGHLTIGNNVTIGPQSGIGKNIPDNQILGGSPAVDRQTFLKTSVLMPRFPELFKRIKKLEKILEKKKEHNI</sequence>
<proteinExistence type="inferred from homology"/>
<organism>
    <name type="scientific">Lawsonia intracellularis (strain PHE/MN1-00)</name>
    <dbReference type="NCBI Taxonomy" id="363253"/>
    <lineage>
        <taxon>Bacteria</taxon>
        <taxon>Pseudomonadati</taxon>
        <taxon>Thermodesulfobacteriota</taxon>
        <taxon>Desulfovibrionia</taxon>
        <taxon>Desulfovibrionales</taxon>
        <taxon>Desulfovibrionaceae</taxon>
        <taxon>Lawsonia</taxon>
    </lineage>
</organism>
<feature type="chain" id="PRO_0000264386" description="UDP-3-O-acylglucosamine N-acyltransferase">
    <location>
        <begin position="1"/>
        <end position="341"/>
    </location>
</feature>
<feature type="active site" description="Proton acceptor" evidence="1">
    <location>
        <position position="236"/>
    </location>
</feature>
<name>LPXD_LAWIP</name>
<keyword id="KW-0012">Acyltransferase</keyword>
<keyword id="KW-0441">Lipid A biosynthesis</keyword>
<keyword id="KW-0444">Lipid biosynthesis</keyword>
<keyword id="KW-0443">Lipid metabolism</keyword>
<keyword id="KW-1185">Reference proteome</keyword>
<keyword id="KW-0677">Repeat</keyword>
<keyword id="KW-0808">Transferase</keyword>
<gene>
    <name evidence="1" type="primary">lpxD</name>
    <name type="ordered locus">LI1021</name>
</gene>
<comment type="function">
    <text evidence="1">Catalyzes the N-acylation of UDP-3-O-acylglucosamine using 3-hydroxyacyl-ACP as the acyl donor. Is involved in the biosynthesis of lipid A, a phosphorylated glycolipid that anchors the lipopolysaccharide to the outer membrane of the cell.</text>
</comment>
<comment type="catalytic activity">
    <reaction evidence="1">
        <text>a UDP-3-O-[(3R)-3-hydroxyacyl]-alpha-D-glucosamine + a (3R)-hydroxyacyl-[ACP] = a UDP-2-N,3-O-bis[(3R)-3-hydroxyacyl]-alpha-D-glucosamine + holo-[ACP] + H(+)</text>
        <dbReference type="Rhea" id="RHEA:53836"/>
        <dbReference type="Rhea" id="RHEA-COMP:9685"/>
        <dbReference type="Rhea" id="RHEA-COMP:9945"/>
        <dbReference type="ChEBI" id="CHEBI:15378"/>
        <dbReference type="ChEBI" id="CHEBI:64479"/>
        <dbReference type="ChEBI" id="CHEBI:78827"/>
        <dbReference type="ChEBI" id="CHEBI:137740"/>
        <dbReference type="ChEBI" id="CHEBI:137748"/>
        <dbReference type="EC" id="2.3.1.191"/>
    </reaction>
</comment>
<comment type="pathway">
    <text evidence="1">Bacterial outer membrane biogenesis; LPS lipid A biosynthesis.</text>
</comment>
<comment type="subunit">
    <text evidence="1">Homotrimer.</text>
</comment>
<comment type="similarity">
    <text evidence="1">Belongs to the transferase hexapeptide repeat family. LpxD subfamily.</text>
</comment>
<reference key="1">
    <citation type="submission" date="2005-11" db="EMBL/GenBank/DDBJ databases">
        <title>The complete genome sequence of Lawsonia intracellularis: the causative agent of proliferative enteropathy.</title>
        <authorList>
            <person name="Kaur K."/>
            <person name="Zhang Q."/>
            <person name="Beckler D."/>
            <person name="Munir S."/>
            <person name="Li L."/>
            <person name="Kinsley K."/>
            <person name="Herron L."/>
            <person name="Peterson A."/>
            <person name="May B."/>
            <person name="Singh S."/>
            <person name="Gebhart C."/>
            <person name="Kapur V."/>
        </authorList>
    </citation>
    <scope>NUCLEOTIDE SEQUENCE [LARGE SCALE GENOMIC DNA]</scope>
    <source>
        <strain>PHE/MN1-00</strain>
    </source>
</reference>
<dbReference type="EC" id="2.3.1.191" evidence="1"/>
<dbReference type="EMBL" id="AM180252">
    <property type="protein sequence ID" value="CAJ55075.1"/>
    <property type="molecule type" value="Genomic_DNA"/>
</dbReference>
<dbReference type="RefSeq" id="WP_011527104.1">
    <property type="nucleotide sequence ID" value="NC_008011.1"/>
</dbReference>
<dbReference type="SMR" id="Q1MPK2"/>
<dbReference type="STRING" id="363253.LI1021"/>
<dbReference type="KEGG" id="lip:LI1021"/>
<dbReference type="eggNOG" id="COG1044">
    <property type="taxonomic scope" value="Bacteria"/>
</dbReference>
<dbReference type="HOGENOM" id="CLU_049865_0_0_7"/>
<dbReference type="OrthoDB" id="9784739at2"/>
<dbReference type="UniPathway" id="UPA00973"/>
<dbReference type="Proteomes" id="UP000002430">
    <property type="component" value="Chromosome"/>
</dbReference>
<dbReference type="GO" id="GO:0016020">
    <property type="term" value="C:membrane"/>
    <property type="evidence" value="ECO:0007669"/>
    <property type="project" value="GOC"/>
</dbReference>
<dbReference type="GO" id="GO:0016410">
    <property type="term" value="F:N-acyltransferase activity"/>
    <property type="evidence" value="ECO:0007669"/>
    <property type="project" value="InterPro"/>
</dbReference>
<dbReference type="GO" id="GO:0009245">
    <property type="term" value="P:lipid A biosynthetic process"/>
    <property type="evidence" value="ECO:0007669"/>
    <property type="project" value="UniProtKB-UniRule"/>
</dbReference>
<dbReference type="CDD" id="cd03352">
    <property type="entry name" value="LbH_LpxD"/>
    <property type="match status" value="1"/>
</dbReference>
<dbReference type="Gene3D" id="2.160.10.10">
    <property type="entry name" value="Hexapeptide repeat proteins"/>
    <property type="match status" value="1"/>
</dbReference>
<dbReference type="Gene3D" id="3.40.1390.10">
    <property type="entry name" value="MurE/MurF, N-terminal domain"/>
    <property type="match status" value="1"/>
</dbReference>
<dbReference type="HAMAP" id="MF_00523">
    <property type="entry name" value="LpxD"/>
    <property type="match status" value="1"/>
</dbReference>
<dbReference type="InterPro" id="IPR001451">
    <property type="entry name" value="Hexapep"/>
</dbReference>
<dbReference type="InterPro" id="IPR018357">
    <property type="entry name" value="Hexapep_transf_CS"/>
</dbReference>
<dbReference type="InterPro" id="IPR007691">
    <property type="entry name" value="LpxD"/>
</dbReference>
<dbReference type="InterPro" id="IPR011004">
    <property type="entry name" value="Trimer_LpxA-like_sf"/>
</dbReference>
<dbReference type="InterPro" id="IPR020573">
    <property type="entry name" value="UDP_GlcNAc_AcTrfase_non-rep"/>
</dbReference>
<dbReference type="NCBIfam" id="TIGR01853">
    <property type="entry name" value="lipid_A_lpxD"/>
    <property type="match status" value="1"/>
</dbReference>
<dbReference type="NCBIfam" id="NF002060">
    <property type="entry name" value="PRK00892.1"/>
    <property type="match status" value="1"/>
</dbReference>
<dbReference type="PANTHER" id="PTHR43378">
    <property type="entry name" value="UDP-3-O-ACYLGLUCOSAMINE N-ACYLTRANSFERASE"/>
    <property type="match status" value="1"/>
</dbReference>
<dbReference type="PANTHER" id="PTHR43378:SF2">
    <property type="entry name" value="UDP-3-O-ACYLGLUCOSAMINE N-ACYLTRANSFERASE 1, MITOCHONDRIAL-RELATED"/>
    <property type="match status" value="1"/>
</dbReference>
<dbReference type="Pfam" id="PF00132">
    <property type="entry name" value="Hexapep"/>
    <property type="match status" value="3"/>
</dbReference>
<dbReference type="Pfam" id="PF04613">
    <property type="entry name" value="LpxD"/>
    <property type="match status" value="1"/>
</dbReference>
<dbReference type="SUPFAM" id="SSF51161">
    <property type="entry name" value="Trimeric LpxA-like enzymes"/>
    <property type="match status" value="1"/>
</dbReference>
<dbReference type="PROSITE" id="PS00101">
    <property type="entry name" value="HEXAPEP_TRANSFERASES"/>
    <property type="match status" value="1"/>
</dbReference>